<organism>
    <name type="scientific">Cavia porcellus</name>
    <name type="common">Guinea pig</name>
    <dbReference type="NCBI Taxonomy" id="10141"/>
    <lineage>
        <taxon>Eukaryota</taxon>
        <taxon>Metazoa</taxon>
        <taxon>Chordata</taxon>
        <taxon>Craniata</taxon>
        <taxon>Vertebrata</taxon>
        <taxon>Euteleostomi</taxon>
        <taxon>Mammalia</taxon>
        <taxon>Eutheria</taxon>
        <taxon>Euarchontoglires</taxon>
        <taxon>Glires</taxon>
        <taxon>Rodentia</taxon>
        <taxon>Hystricomorpha</taxon>
        <taxon>Caviidae</taxon>
        <taxon>Cavia</taxon>
    </lineage>
</organism>
<name>DEF1A_CAVPO</name>
<reference key="1">
    <citation type="journal article" date="1991" name="FEBS Lett.">
        <title>Characterization of cDNA clones encoding guinea pig neutrophil cationic peptides.</title>
        <authorList>
            <person name="Nagaoka I."/>
            <person name="Someya A."/>
            <person name="Iwabuchi K."/>
            <person name="Yamashita T."/>
        </authorList>
    </citation>
    <scope>NUCLEOTIDE SEQUENCE [MRNA]</scope>
    <source>
        <strain>Hartley</strain>
        <tissue>Bone marrow</tissue>
    </source>
</reference>
<reference key="2">
    <citation type="journal article" date="1987" name="Infect. Immun.">
        <title>Purification, primary structure, and antimicrobial activities of a guinea pig neutrophil defensin.</title>
        <authorList>
            <person name="Selsted M.E."/>
            <person name="Harwig S.S.L."/>
        </authorList>
    </citation>
    <scope>PROTEIN SEQUENCE OF 63-93</scope>
    <source>
        <tissue>Peritoneal neutrophil</tissue>
    </source>
</reference>
<reference key="3">
    <citation type="journal article" date="1991" name="Biochem. Biophys. Res. Commun.">
        <title>Isolation and characterization of corticostatic peptides from guinea pig bone marrow.</title>
        <authorList>
            <person name="Hu J."/>
            <person name="Bennett H.P.J."/>
            <person name="Lazure C."/>
            <person name="Solomon S."/>
        </authorList>
    </citation>
    <scope>PROTEIN SEQUENCE OF 63-93</scope>
    <source>
        <tissue>Bone marrow</tissue>
    </source>
</reference>
<reference key="4">
    <citation type="journal article" date="1989" name="Infect. Immun.">
        <title>Purification, primary structure, and biological activity of guinea pig neutrophil cationic peptides.</title>
        <authorList>
            <person name="Yamashita T."/>
            <person name="Saito K."/>
        </authorList>
    </citation>
    <scope>PROTEIN SEQUENCE OF 63-93</scope>
    <source>
        <tissue>Neutrophil</tissue>
    </source>
</reference>
<evidence type="ECO:0000250" key="1"/>
<evidence type="ECO:0000255" key="2"/>
<evidence type="ECO:0000269" key="3">
    <source>
    </source>
</evidence>
<evidence type="ECO:0000269" key="4">
    <source>
    </source>
</evidence>
<evidence type="ECO:0000269" key="5">
    <source>
    </source>
</evidence>
<evidence type="ECO:0000305" key="6"/>
<sequence>MRTVPLFAACLLLTLMAQAEPLPRAADHSDTKMKGDREDHVAVISFWEEESTSLEDAGAGAGRRCICTTRTCRFPYRRLGTCIFQNRVYTFCC</sequence>
<feature type="signal peptide" evidence="2">
    <location>
        <begin position="1"/>
        <end position="19"/>
    </location>
</feature>
<feature type="propeptide" id="PRO_0000006765" evidence="3 4 5">
    <location>
        <begin position="20"/>
        <end position="62"/>
    </location>
</feature>
<feature type="peptide" id="PRO_0000006766" description="Neutrophil cationic peptide 1">
    <location>
        <begin position="63"/>
        <end position="93"/>
    </location>
</feature>
<feature type="disulfide bond" evidence="1">
    <location>
        <begin position="65"/>
        <end position="93"/>
    </location>
</feature>
<feature type="disulfide bond" evidence="1">
    <location>
        <begin position="67"/>
        <end position="82"/>
    </location>
</feature>
<feature type="disulfide bond" evidence="1">
    <location>
        <begin position="72"/>
        <end position="92"/>
    </location>
</feature>
<proteinExistence type="evidence at protein level"/>
<keyword id="KW-0044">Antibiotic</keyword>
<keyword id="KW-0929">Antimicrobial</keyword>
<keyword id="KW-0051">Antiviral defense</keyword>
<keyword id="KW-0211">Defensin</keyword>
<keyword id="KW-0903">Direct protein sequencing</keyword>
<keyword id="KW-1015">Disulfide bond</keyword>
<keyword id="KW-0295">Fungicide</keyword>
<keyword id="KW-1185">Reference proteome</keyword>
<keyword id="KW-0964">Secreted</keyword>
<keyword id="KW-0732">Signal</keyword>
<accession>P11478</accession>
<comment type="function">
    <text>Has antibiotic, anti-fungi and antiviral activity.</text>
</comment>
<comment type="subcellular location">
    <subcellularLocation>
        <location>Secreted</location>
    </subcellularLocation>
</comment>
<comment type="similarity">
    <text evidence="6">Belongs to the alpha-defensin family.</text>
</comment>
<protein>
    <recommendedName>
        <fullName>Neutrophil cationic peptide 1 type A</fullName>
    </recommendedName>
    <alternativeName>
        <fullName>GNCP-1A</fullName>
    </alternativeName>
    <component>
        <recommendedName>
            <fullName>Neutrophil cationic peptide 1</fullName>
        </recommendedName>
        <alternativeName>
            <fullName>Corticostatic peptide GP-CS1</fullName>
            <shortName>CP-1</shortName>
        </alternativeName>
        <alternativeName>
            <fullName>GPNP</fullName>
        </alternativeName>
        <alternativeName>
            <fullName>Neutrophil defensin</fullName>
        </alternativeName>
    </component>
</protein>
<dbReference type="EMBL" id="D14119">
    <property type="protein sequence ID" value="BAA03182.1"/>
    <property type="molecule type" value="Genomic_DNA"/>
</dbReference>
<dbReference type="EMBL" id="X57705">
    <property type="protein sequence ID" value="CAA40880.1"/>
    <property type="status" value="ALT_SEQ"/>
    <property type="molecule type" value="mRNA"/>
</dbReference>
<dbReference type="EMBL" id="D37971">
    <property type="protein sequence ID" value="BAA07189.1"/>
    <property type="molecule type" value="Genomic_DNA"/>
</dbReference>
<dbReference type="PIR" id="S14314">
    <property type="entry name" value="S14314"/>
</dbReference>
<dbReference type="SMR" id="P11478"/>
<dbReference type="FunCoup" id="P11478">
    <property type="interactions" value="24"/>
</dbReference>
<dbReference type="TCDB" id="1.C.19.1.3">
    <property type="family name" value="the defensin (defensin) family"/>
</dbReference>
<dbReference type="Ensembl" id="ENSCPOT00000000426.3">
    <property type="protein sequence ID" value="ENSCPOP00000014806.2"/>
    <property type="gene ID" value="ENSCPOG00000000422.4"/>
</dbReference>
<dbReference type="VEuPathDB" id="HostDB:ENSCPOG00000000422"/>
<dbReference type="HOGENOM" id="CLU_160803_0_0_1"/>
<dbReference type="InParanoid" id="P11478"/>
<dbReference type="OMA" id="CHCSRTF"/>
<dbReference type="Proteomes" id="UP000005447">
    <property type="component" value="Unassembled WGS sequence"/>
</dbReference>
<dbReference type="Bgee" id="ENSCPOG00000000422">
    <property type="expression patterns" value="Expressed in heart left ventricle and 4 other cell types or tissues"/>
</dbReference>
<dbReference type="GO" id="GO:0031012">
    <property type="term" value="C:extracellular matrix"/>
    <property type="evidence" value="ECO:0007669"/>
    <property type="project" value="TreeGrafter"/>
</dbReference>
<dbReference type="GO" id="GO:0005615">
    <property type="term" value="C:extracellular space"/>
    <property type="evidence" value="ECO:0007669"/>
    <property type="project" value="InterPro"/>
</dbReference>
<dbReference type="GO" id="GO:0019731">
    <property type="term" value="P:antibacterial humoral response"/>
    <property type="evidence" value="ECO:0007669"/>
    <property type="project" value="TreeGrafter"/>
</dbReference>
<dbReference type="GO" id="GO:0061844">
    <property type="term" value="P:antimicrobial humoral immune response mediated by antimicrobial peptide"/>
    <property type="evidence" value="ECO:0007669"/>
    <property type="project" value="TreeGrafter"/>
</dbReference>
<dbReference type="GO" id="GO:0071222">
    <property type="term" value="P:cellular response to lipopolysaccharide"/>
    <property type="evidence" value="ECO:0007669"/>
    <property type="project" value="TreeGrafter"/>
</dbReference>
<dbReference type="GO" id="GO:0050832">
    <property type="term" value="P:defense response to fungus"/>
    <property type="evidence" value="ECO:0007669"/>
    <property type="project" value="UniProtKB-KW"/>
</dbReference>
<dbReference type="GO" id="GO:0050829">
    <property type="term" value="P:defense response to Gram-negative bacterium"/>
    <property type="evidence" value="ECO:0007669"/>
    <property type="project" value="TreeGrafter"/>
</dbReference>
<dbReference type="GO" id="GO:0050830">
    <property type="term" value="P:defense response to Gram-positive bacterium"/>
    <property type="evidence" value="ECO:0007669"/>
    <property type="project" value="TreeGrafter"/>
</dbReference>
<dbReference type="GO" id="GO:0051607">
    <property type="term" value="P:defense response to virus"/>
    <property type="evidence" value="ECO:0007669"/>
    <property type="project" value="UniProtKB-KW"/>
</dbReference>
<dbReference type="GO" id="GO:0051673">
    <property type="term" value="P:disruption of plasma membrane integrity in another organism"/>
    <property type="evidence" value="ECO:0007669"/>
    <property type="project" value="TreeGrafter"/>
</dbReference>
<dbReference type="GO" id="GO:0002227">
    <property type="term" value="P:innate immune response in mucosa"/>
    <property type="evidence" value="ECO:0007669"/>
    <property type="project" value="TreeGrafter"/>
</dbReference>
<dbReference type="GO" id="GO:0031640">
    <property type="term" value="P:killing of cells of another organism"/>
    <property type="evidence" value="ECO:0007669"/>
    <property type="project" value="UniProtKB-KW"/>
</dbReference>
<dbReference type="InterPro" id="IPR016327">
    <property type="entry name" value="Alpha-defensin"/>
</dbReference>
<dbReference type="InterPro" id="IPR006081">
    <property type="entry name" value="Alpha-defensin_C"/>
</dbReference>
<dbReference type="InterPro" id="IPR002366">
    <property type="entry name" value="Alpha-defensin_N"/>
</dbReference>
<dbReference type="InterPro" id="IPR006080">
    <property type="entry name" value="Beta/alpha-defensin_C"/>
</dbReference>
<dbReference type="PANTHER" id="PTHR11876">
    <property type="entry name" value="ALPHA-DEFENSIN 1"/>
    <property type="match status" value="1"/>
</dbReference>
<dbReference type="PANTHER" id="PTHR11876:SF28">
    <property type="entry name" value="ALPHA-DEFENSIN 1"/>
    <property type="match status" value="1"/>
</dbReference>
<dbReference type="Pfam" id="PF00323">
    <property type="entry name" value="Defensin_1"/>
    <property type="match status" value="1"/>
</dbReference>
<dbReference type="Pfam" id="PF00879">
    <property type="entry name" value="Defensin_propep"/>
    <property type="match status" value="1"/>
</dbReference>
<dbReference type="PIRSF" id="PIRSF001875">
    <property type="entry name" value="Alpha-defensin"/>
    <property type="match status" value="1"/>
</dbReference>
<dbReference type="SMART" id="SM01418">
    <property type="entry name" value="Defensin_propep"/>
    <property type="match status" value="1"/>
</dbReference>
<dbReference type="SMART" id="SM00048">
    <property type="entry name" value="DEFSN"/>
    <property type="match status" value="1"/>
</dbReference>
<dbReference type="PROSITE" id="PS00269">
    <property type="entry name" value="DEFENSIN"/>
    <property type="match status" value="1"/>
</dbReference>